<name>PSAM_EUGSA</name>
<proteinExistence type="inferred from homology"/>
<feature type="chain" id="PRO_0000277405" description="Photosystem I reaction center subunit XII">
    <location>
        <begin position="1"/>
        <end position="31"/>
    </location>
</feature>
<feature type="transmembrane region" description="Helical" evidence="1">
    <location>
        <begin position="7"/>
        <end position="26"/>
    </location>
</feature>
<evidence type="ECO:0000255" key="1">
    <source>
        <dbReference type="HAMAP-Rule" id="MF_00828"/>
    </source>
</evidence>
<gene>
    <name evidence="1" type="primary">psaM</name>
</gene>
<comment type="subcellular location">
    <subcellularLocation>
        <location evidence="1">Plastid</location>
        <location evidence="1">Chloroplast thylakoid membrane</location>
        <topology evidence="1">Single-pass membrane protein</topology>
    </subcellularLocation>
</comment>
<comment type="similarity">
    <text evidence="1">Belongs to the PsaM family.</text>
</comment>
<dbReference type="EMBL" id="AF241282">
    <property type="protein sequence ID" value="AAF82456.1"/>
    <property type="molecule type" value="Genomic_DNA"/>
</dbReference>
<dbReference type="SMR" id="Q9MS59"/>
<dbReference type="GO" id="GO:0009535">
    <property type="term" value="C:chloroplast thylakoid membrane"/>
    <property type="evidence" value="ECO:0007669"/>
    <property type="project" value="UniProtKB-SubCell"/>
</dbReference>
<dbReference type="GO" id="GO:0009522">
    <property type="term" value="C:photosystem I"/>
    <property type="evidence" value="ECO:0007669"/>
    <property type="project" value="UniProtKB-KW"/>
</dbReference>
<dbReference type="GO" id="GO:0015979">
    <property type="term" value="P:photosynthesis"/>
    <property type="evidence" value="ECO:0007669"/>
    <property type="project" value="UniProtKB-UniRule"/>
</dbReference>
<dbReference type="HAMAP" id="MF_00828">
    <property type="entry name" value="PSI_PsaM"/>
    <property type="match status" value="1"/>
</dbReference>
<dbReference type="InterPro" id="IPR010010">
    <property type="entry name" value="PSI_PsaM"/>
</dbReference>
<dbReference type="InterPro" id="IPR037279">
    <property type="entry name" value="PSI_PsaM_sf"/>
</dbReference>
<dbReference type="NCBIfam" id="TIGR03053">
    <property type="entry name" value="PS_I_psaM"/>
    <property type="match status" value="1"/>
</dbReference>
<dbReference type="Pfam" id="PF07465">
    <property type="entry name" value="PsaM"/>
    <property type="match status" value="1"/>
</dbReference>
<dbReference type="SUPFAM" id="SSF81548">
    <property type="entry name" value="Subunit XII of photosystem I reaction centre, PsaM"/>
    <property type="match status" value="1"/>
</dbReference>
<sequence>MAIDNTQIFIALLTALIPAFFALKLGKELSK</sequence>
<protein>
    <recommendedName>
        <fullName evidence="1">Photosystem I reaction center subunit XII</fullName>
    </recommendedName>
    <alternativeName>
        <fullName evidence="1">PSI-M</fullName>
    </alternativeName>
</protein>
<reference key="1">
    <citation type="journal article" date="2001" name="Mol. Gen. Genet.">
        <title>Comparison of psbK operon organization and group III intron content in chloroplast genomes of 12 Euglenoid species.</title>
        <authorList>
            <person name="Doetsch N.A."/>
            <person name="Thompson M.D."/>
            <person name="Favreau M.R."/>
            <person name="Hallick R.B."/>
        </authorList>
    </citation>
    <scope>NUCLEOTIDE SEQUENCE [GENOMIC DNA]</scope>
</reference>
<geneLocation type="chloroplast"/>
<accession>Q9MS59</accession>
<keyword id="KW-0150">Chloroplast</keyword>
<keyword id="KW-0472">Membrane</keyword>
<keyword id="KW-0602">Photosynthesis</keyword>
<keyword id="KW-0603">Photosystem I</keyword>
<keyword id="KW-0934">Plastid</keyword>
<keyword id="KW-0793">Thylakoid</keyword>
<keyword id="KW-0812">Transmembrane</keyword>
<keyword id="KW-1133">Transmembrane helix</keyword>
<organism>
    <name type="scientific">Euglena sanguinea</name>
    <dbReference type="NCBI Taxonomy" id="130315"/>
    <lineage>
        <taxon>Eukaryota</taxon>
        <taxon>Discoba</taxon>
        <taxon>Euglenozoa</taxon>
        <taxon>Euglenida</taxon>
        <taxon>Spirocuta</taxon>
        <taxon>Euglenophyceae</taxon>
        <taxon>Euglenales</taxon>
        <taxon>Euglenaceae</taxon>
        <taxon>Euglena</taxon>
    </lineage>
</organism>